<name>MURC_CLOB1</name>
<dbReference type="EC" id="6.3.2.8" evidence="1"/>
<dbReference type="EMBL" id="CP000726">
    <property type="protein sequence ID" value="ABS32482.1"/>
    <property type="molecule type" value="Genomic_DNA"/>
</dbReference>
<dbReference type="RefSeq" id="WP_012048388.1">
    <property type="nucleotide sequence ID" value="NC_009697.1"/>
</dbReference>
<dbReference type="SMR" id="A7FPH5"/>
<dbReference type="GeneID" id="5187804"/>
<dbReference type="KEGG" id="cba:CLB_3629"/>
<dbReference type="HOGENOM" id="CLU_028104_1_0_9"/>
<dbReference type="UniPathway" id="UPA00219"/>
<dbReference type="GO" id="GO:0005737">
    <property type="term" value="C:cytoplasm"/>
    <property type="evidence" value="ECO:0007669"/>
    <property type="project" value="UniProtKB-SubCell"/>
</dbReference>
<dbReference type="GO" id="GO:0005524">
    <property type="term" value="F:ATP binding"/>
    <property type="evidence" value="ECO:0007669"/>
    <property type="project" value="UniProtKB-UniRule"/>
</dbReference>
<dbReference type="GO" id="GO:0008763">
    <property type="term" value="F:UDP-N-acetylmuramate-L-alanine ligase activity"/>
    <property type="evidence" value="ECO:0007669"/>
    <property type="project" value="UniProtKB-UniRule"/>
</dbReference>
<dbReference type="GO" id="GO:0051301">
    <property type="term" value="P:cell division"/>
    <property type="evidence" value="ECO:0007669"/>
    <property type="project" value="UniProtKB-KW"/>
</dbReference>
<dbReference type="GO" id="GO:0071555">
    <property type="term" value="P:cell wall organization"/>
    <property type="evidence" value="ECO:0007669"/>
    <property type="project" value="UniProtKB-KW"/>
</dbReference>
<dbReference type="GO" id="GO:0009252">
    <property type="term" value="P:peptidoglycan biosynthetic process"/>
    <property type="evidence" value="ECO:0007669"/>
    <property type="project" value="UniProtKB-UniRule"/>
</dbReference>
<dbReference type="GO" id="GO:0008360">
    <property type="term" value="P:regulation of cell shape"/>
    <property type="evidence" value="ECO:0007669"/>
    <property type="project" value="UniProtKB-KW"/>
</dbReference>
<dbReference type="Gene3D" id="3.90.190.20">
    <property type="entry name" value="Mur ligase, C-terminal domain"/>
    <property type="match status" value="1"/>
</dbReference>
<dbReference type="Gene3D" id="3.40.1190.10">
    <property type="entry name" value="Mur-like, catalytic domain"/>
    <property type="match status" value="1"/>
</dbReference>
<dbReference type="Gene3D" id="3.40.50.720">
    <property type="entry name" value="NAD(P)-binding Rossmann-like Domain"/>
    <property type="match status" value="1"/>
</dbReference>
<dbReference type="HAMAP" id="MF_00046">
    <property type="entry name" value="MurC"/>
    <property type="match status" value="1"/>
</dbReference>
<dbReference type="InterPro" id="IPR036565">
    <property type="entry name" value="Mur-like_cat_sf"/>
</dbReference>
<dbReference type="InterPro" id="IPR004101">
    <property type="entry name" value="Mur_ligase_C"/>
</dbReference>
<dbReference type="InterPro" id="IPR036615">
    <property type="entry name" value="Mur_ligase_C_dom_sf"/>
</dbReference>
<dbReference type="InterPro" id="IPR013221">
    <property type="entry name" value="Mur_ligase_cen"/>
</dbReference>
<dbReference type="InterPro" id="IPR000713">
    <property type="entry name" value="Mur_ligase_N"/>
</dbReference>
<dbReference type="InterPro" id="IPR050061">
    <property type="entry name" value="MurCDEF_pg_biosynth"/>
</dbReference>
<dbReference type="InterPro" id="IPR005758">
    <property type="entry name" value="UDP-N-AcMur_Ala_ligase_MurC"/>
</dbReference>
<dbReference type="NCBIfam" id="TIGR01082">
    <property type="entry name" value="murC"/>
    <property type="match status" value="1"/>
</dbReference>
<dbReference type="PANTHER" id="PTHR43445:SF3">
    <property type="entry name" value="UDP-N-ACETYLMURAMATE--L-ALANINE LIGASE"/>
    <property type="match status" value="1"/>
</dbReference>
<dbReference type="PANTHER" id="PTHR43445">
    <property type="entry name" value="UDP-N-ACETYLMURAMATE--L-ALANINE LIGASE-RELATED"/>
    <property type="match status" value="1"/>
</dbReference>
<dbReference type="Pfam" id="PF01225">
    <property type="entry name" value="Mur_ligase"/>
    <property type="match status" value="1"/>
</dbReference>
<dbReference type="Pfam" id="PF02875">
    <property type="entry name" value="Mur_ligase_C"/>
    <property type="match status" value="1"/>
</dbReference>
<dbReference type="Pfam" id="PF08245">
    <property type="entry name" value="Mur_ligase_M"/>
    <property type="match status" value="1"/>
</dbReference>
<dbReference type="SUPFAM" id="SSF51984">
    <property type="entry name" value="MurCD N-terminal domain"/>
    <property type="match status" value="1"/>
</dbReference>
<dbReference type="SUPFAM" id="SSF53623">
    <property type="entry name" value="MurD-like peptide ligases, catalytic domain"/>
    <property type="match status" value="1"/>
</dbReference>
<dbReference type="SUPFAM" id="SSF53244">
    <property type="entry name" value="MurD-like peptide ligases, peptide-binding domain"/>
    <property type="match status" value="1"/>
</dbReference>
<proteinExistence type="inferred from homology"/>
<accession>A7FPH5</accession>
<gene>
    <name evidence="1" type="primary">murC</name>
    <name type="ordered locus">CLB_3629</name>
</gene>
<evidence type="ECO:0000255" key="1">
    <source>
        <dbReference type="HAMAP-Rule" id="MF_00046"/>
    </source>
</evidence>
<keyword id="KW-0067">ATP-binding</keyword>
<keyword id="KW-0131">Cell cycle</keyword>
<keyword id="KW-0132">Cell division</keyword>
<keyword id="KW-0133">Cell shape</keyword>
<keyword id="KW-0961">Cell wall biogenesis/degradation</keyword>
<keyword id="KW-0963">Cytoplasm</keyword>
<keyword id="KW-0436">Ligase</keyword>
<keyword id="KW-0547">Nucleotide-binding</keyword>
<keyword id="KW-0573">Peptidoglycan synthesis</keyword>
<comment type="function">
    <text evidence="1">Cell wall formation.</text>
</comment>
<comment type="catalytic activity">
    <reaction evidence="1">
        <text>UDP-N-acetyl-alpha-D-muramate + L-alanine + ATP = UDP-N-acetyl-alpha-D-muramoyl-L-alanine + ADP + phosphate + H(+)</text>
        <dbReference type="Rhea" id="RHEA:23372"/>
        <dbReference type="ChEBI" id="CHEBI:15378"/>
        <dbReference type="ChEBI" id="CHEBI:30616"/>
        <dbReference type="ChEBI" id="CHEBI:43474"/>
        <dbReference type="ChEBI" id="CHEBI:57972"/>
        <dbReference type="ChEBI" id="CHEBI:70757"/>
        <dbReference type="ChEBI" id="CHEBI:83898"/>
        <dbReference type="ChEBI" id="CHEBI:456216"/>
        <dbReference type="EC" id="6.3.2.8"/>
    </reaction>
</comment>
<comment type="pathway">
    <text evidence="1">Cell wall biogenesis; peptidoglycan biosynthesis.</text>
</comment>
<comment type="subcellular location">
    <subcellularLocation>
        <location evidence="1">Cytoplasm</location>
    </subcellularLocation>
</comment>
<comment type="similarity">
    <text evidence="1">Belongs to the MurCDEF family.</text>
</comment>
<sequence length="458" mass="51146">MSFDFIKDKNKHIHFIGIGGISMSGLAEILLYNNFSISGSDMNSSPITEKLKDKGAKIYIGHKKENVKDADLIVYTAAIASDNPEITKAKEKNIKLMDRADFLGNLMKGYKYNIAISGTHGKTTTTSMLSHVALKANVDPTILVGGNLDIINGNVRVGESDFFITEACEYKSSFLKFFPYIGVILNIDADHLDYYKDLDDIKNAFSKFIKLIPKDGYLVAYGEDKNIQSIIKEASCNVITYGINSGDIQAHNIEYDEKACGNFDVVKDNQKLFSVKLNVPGKHNILNSLASICIGLASNMKDKDIIEGIESFFGTHRRFELKGCKNNITVIDDYAHHPTEISATLDAAKKYPHNKLFCVFQPHTYSRTLTLFDDFTKCFDNADEIILADIYAAREKDTGIISSDMLGDKLRDRGLKCTNFHKFDDIKNYLIENTKDGDLILTVGAGDIYKVGEMYINL</sequence>
<protein>
    <recommendedName>
        <fullName evidence="1">UDP-N-acetylmuramate--L-alanine ligase</fullName>
        <ecNumber evidence="1">6.3.2.8</ecNumber>
    </recommendedName>
    <alternativeName>
        <fullName evidence="1">UDP-N-acetylmuramoyl-L-alanine synthetase</fullName>
    </alternativeName>
</protein>
<feature type="chain" id="PRO_1000004332" description="UDP-N-acetylmuramate--L-alanine ligase">
    <location>
        <begin position="1"/>
        <end position="458"/>
    </location>
</feature>
<feature type="binding site" evidence="1">
    <location>
        <begin position="118"/>
        <end position="124"/>
    </location>
    <ligand>
        <name>ATP</name>
        <dbReference type="ChEBI" id="CHEBI:30616"/>
    </ligand>
</feature>
<organism>
    <name type="scientific">Clostridium botulinum (strain ATCC 19397 / Type A)</name>
    <dbReference type="NCBI Taxonomy" id="441770"/>
    <lineage>
        <taxon>Bacteria</taxon>
        <taxon>Bacillati</taxon>
        <taxon>Bacillota</taxon>
        <taxon>Clostridia</taxon>
        <taxon>Eubacteriales</taxon>
        <taxon>Clostridiaceae</taxon>
        <taxon>Clostridium</taxon>
    </lineage>
</organism>
<reference key="1">
    <citation type="journal article" date="2007" name="PLoS ONE">
        <title>Analysis of the neurotoxin complex genes in Clostridium botulinum A1-A4 and B1 strains: BoNT/A3, /Ba4 and /B1 clusters are located within plasmids.</title>
        <authorList>
            <person name="Smith T.J."/>
            <person name="Hill K.K."/>
            <person name="Foley B.T."/>
            <person name="Detter J.C."/>
            <person name="Munk A.C."/>
            <person name="Bruce D.C."/>
            <person name="Doggett N.A."/>
            <person name="Smith L.A."/>
            <person name="Marks J.D."/>
            <person name="Xie G."/>
            <person name="Brettin T.S."/>
        </authorList>
    </citation>
    <scope>NUCLEOTIDE SEQUENCE [LARGE SCALE GENOMIC DNA]</scope>
    <source>
        <strain>ATCC 19397 / Type A</strain>
    </source>
</reference>